<accession>Q9BG93</accession>
<reference key="1">
    <citation type="journal article" date="2001" name="Am. J. Hum. Genet.">
        <title>Primate DAX1, SRY, and SOX9: evolutionary stratification of sex-determination pathway.</title>
        <authorList>
            <person name="Patel M."/>
            <person name="Dorman K.S."/>
            <person name="Zhang Y.-H."/>
            <person name="Huang B.-L."/>
            <person name="Arnold A.P."/>
            <person name="Sinsheimer J.S."/>
            <person name="Vilain E."/>
            <person name="McCabe E.R.B."/>
        </authorList>
    </citation>
    <scope>NUCLEOTIDE SEQUENCE [MRNA]</scope>
</reference>
<organism>
    <name type="scientific">Macaca mulatta</name>
    <name type="common">Rhesus macaque</name>
    <dbReference type="NCBI Taxonomy" id="9544"/>
    <lineage>
        <taxon>Eukaryota</taxon>
        <taxon>Metazoa</taxon>
        <taxon>Chordata</taxon>
        <taxon>Craniata</taxon>
        <taxon>Vertebrata</taxon>
        <taxon>Euteleostomi</taxon>
        <taxon>Mammalia</taxon>
        <taxon>Eutheria</taxon>
        <taxon>Euarchontoglires</taxon>
        <taxon>Primates</taxon>
        <taxon>Haplorrhini</taxon>
        <taxon>Catarrhini</taxon>
        <taxon>Cercopithecidae</taxon>
        <taxon>Cercopithecinae</taxon>
        <taxon>Macaca</taxon>
    </lineage>
</organism>
<evidence type="ECO:0000250" key="1">
    <source>
        <dbReference type="UniProtKB" id="P51843"/>
    </source>
</evidence>
<evidence type="ECO:0000250" key="2">
    <source>
        <dbReference type="UniProtKB" id="Q61066"/>
    </source>
</evidence>
<evidence type="ECO:0000255" key="3">
    <source>
        <dbReference type="PROSITE-ProRule" id="PRU01189"/>
    </source>
</evidence>
<evidence type="ECO:0000305" key="4"/>
<proteinExistence type="evidence at transcript level"/>
<name>NR0B1_MACMU</name>
<sequence>MAGENHQWQGSILYNMLMSAKQTRAAPEAPETRLVDQCWGCSCGDEPGVGREGLLGGRNVSLLYRCCFCGKDHPRQGSILYSMLTNAKQTYAAPKAPEATLGPCWGCSCGSDPGVGRTGLPGGRPVALLYRCCFCGEDHPRQGSILYSLLTSAKQTHVAPAAPEARPGGAWWDRSYFAQRPGGREALPGGRAMGLLYRCCFCGEDHPQQGSTLYCMPTSTNQAQAAPEERPRAPWWDTSSGALRPVALKNPQVVCEAASAGLLKTLRFVKYLPCFQVLPLDQQLVLVRNCWASLLMLELAQDRLQFETVEVSEPSMLQKILTTRRRETGGDEPLPVPTLQHHLAPPAEARKVPSASQVQAIKCFLSKCWSLNISTKEYAYLKGTVLFNPDVPGLQCVKYIQGLQWGTQQILSEHTRMTHQGPHDRFIELNSTLFLLRFINANVIAELFFRPIIGTVSMDDMMLEMLCTKL</sequence>
<protein>
    <recommendedName>
        <fullName>Nuclear receptor subfamily 0 group B member 1</fullName>
    </recommendedName>
    <alternativeName>
        <fullName>Nuclear receptor DAX-1</fullName>
    </alternativeName>
</protein>
<gene>
    <name type="primary">NR0B1</name>
    <name type="synonym">DAX1</name>
</gene>
<feature type="chain" id="PRO_0000280116" description="Nuclear receptor subfamily 0 group B member 1">
    <location>
        <begin position="1"/>
        <end position="470"/>
    </location>
</feature>
<feature type="repeat" description="1">
    <location>
        <begin position="1"/>
        <end position="67"/>
    </location>
</feature>
<feature type="repeat" description="2">
    <location>
        <begin position="68"/>
        <end position="133"/>
    </location>
</feature>
<feature type="repeat" description="3">
    <location>
        <begin position="134"/>
        <end position="200"/>
    </location>
</feature>
<feature type="repeat" description="4; truncated">
    <location>
        <begin position="201"/>
        <end position="253"/>
    </location>
</feature>
<feature type="domain" description="NR LBD" evidence="3">
    <location>
        <begin position="205"/>
        <end position="469"/>
    </location>
</feature>
<feature type="region of interest" description="4 X 67 AA tandem repeats">
    <location>
        <begin position="1"/>
        <end position="253"/>
    </location>
</feature>
<feature type="short sequence motif" description="LXXLL motif 1">
    <location>
        <begin position="13"/>
        <end position="17"/>
    </location>
</feature>
<feature type="short sequence motif" description="LXXLL motif 2">
    <location>
        <begin position="80"/>
        <end position="84"/>
    </location>
</feature>
<feature type="short sequence motif" description="LXXLL motif 3">
    <location>
        <begin position="146"/>
        <end position="150"/>
    </location>
</feature>
<feature type="short sequence motif" description="AF-2 motif">
    <location>
        <begin position="461"/>
        <end position="466"/>
    </location>
</feature>
<keyword id="KW-0963">Cytoplasm</keyword>
<keyword id="KW-0539">Nucleus</keyword>
<keyword id="KW-0675">Receptor</keyword>
<keyword id="KW-1185">Reference proteome</keyword>
<keyword id="KW-0677">Repeat</keyword>
<keyword id="KW-0678">Repressor</keyword>
<keyword id="KW-0804">Transcription</keyword>
<keyword id="KW-0805">Transcription regulation</keyword>
<comment type="function">
    <text evidence="1 2">Nuclear receptor that lacks a DNA-binding domain and acts as a corepressor that inhibits the transcriptional activity of other nuclear receptors through heterodimeric interactions. Component of a cascade required for the development of the hypothalamic-pituitary-adrenal-gonadal axis (By similarity). May also have a role in the development of the embryo and in the maintenance of embryonic stem cell pluripotency (By similarity).</text>
</comment>
<comment type="subunit">
    <text evidence="1 2">Homodimer. Interacts with NR5A1, NR5A2, NR0B2 and with COPS2 (By similarity). Interacts with ESRRB; represses ESRRB activity at the GATA6 promoter (By similarity).</text>
</comment>
<comment type="subcellular location">
    <subcellularLocation>
        <location evidence="1">Nucleus</location>
    </subcellularLocation>
    <subcellularLocation>
        <location evidence="1">Cytoplasm</location>
    </subcellularLocation>
    <text evidence="1">Shuttles between the cytoplasm and nucleus. Homodimers exits in the cytoplasm and in the nucleus.</text>
</comment>
<comment type="domain">
    <text evidence="1">Homodimerization involved an interaction between amino and carboxy termini involving LXXLL motifs and steroid binding domain (AF-2 motif). Heterodimerizes with NR5A1 and NROB2 through its N-terminal LXXLL motifs.</text>
</comment>
<comment type="similarity">
    <text evidence="4">Belongs to the nuclear hormone receptor family. NR0 subfamily.</text>
</comment>
<dbReference type="EMBL" id="AF322896">
    <property type="protein sequence ID" value="AAK01647.1"/>
    <property type="molecule type" value="mRNA"/>
</dbReference>
<dbReference type="SMR" id="Q9BG93"/>
<dbReference type="FunCoup" id="Q9BG93">
    <property type="interactions" value="176"/>
</dbReference>
<dbReference type="STRING" id="9544.ENSMMUP00000016782"/>
<dbReference type="PaxDb" id="9544-ENSMMUP00000016782"/>
<dbReference type="eggNOG" id="KOG3575">
    <property type="taxonomic scope" value="Eukaryota"/>
</dbReference>
<dbReference type="InParanoid" id="Q9BG93"/>
<dbReference type="Proteomes" id="UP000006718">
    <property type="component" value="Unassembled WGS sequence"/>
</dbReference>
<dbReference type="GO" id="GO:0005737">
    <property type="term" value="C:cytoplasm"/>
    <property type="evidence" value="ECO:0000250"/>
    <property type="project" value="UniProtKB"/>
</dbReference>
<dbReference type="GO" id="GO:0016020">
    <property type="term" value="C:membrane"/>
    <property type="evidence" value="ECO:0000250"/>
    <property type="project" value="UniProtKB"/>
</dbReference>
<dbReference type="GO" id="GO:0005654">
    <property type="term" value="C:nucleoplasm"/>
    <property type="evidence" value="ECO:0007669"/>
    <property type="project" value="UniProtKB-ARBA"/>
</dbReference>
<dbReference type="GO" id="GO:0005634">
    <property type="term" value="C:nucleus"/>
    <property type="evidence" value="ECO:0000250"/>
    <property type="project" value="UniProtKB"/>
</dbReference>
<dbReference type="GO" id="GO:0005840">
    <property type="term" value="C:ribosome"/>
    <property type="evidence" value="ECO:0000250"/>
    <property type="project" value="UniProtKB"/>
</dbReference>
<dbReference type="GO" id="GO:0032448">
    <property type="term" value="F:DNA hairpin binding"/>
    <property type="evidence" value="ECO:0000250"/>
    <property type="project" value="UniProtKB"/>
</dbReference>
<dbReference type="GO" id="GO:0016922">
    <property type="term" value="F:nuclear receptor binding"/>
    <property type="evidence" value="ECO:0000250"/>
    <property type="project" value="UniProtKB"/>
</dbReference>
<dbReference type="GO" id="GO:0019904">
    <property type="term" value="F:protein domain specific binding"/>
    <property type="evidence" value="ECO:0000250"/>
    <property type="project" value="UniProtKB"/>
</dbReference>
<dbReference type="GO" id="GO:0042803">
    <property type="term" value="F:protein homodimerization activity"/>
    <property type="evidence" value="ECO:0000250"/>
    <property type="project" value="UniProtKB"/>
</dbReference>
<dbReference type="GO" id="GO:0003723">
    <property type="term" value="F:RNA binding"/>
    <property type="evidence" value="ECO:0000250"/>
    <property type="project" value="UniProtKB"/>
</dbReference>
<dbReference type="GO" id="GO:0003714">
    <property type="term" value="F:transcription corepressor activity"/>
    <property type="evidence" value="ECO:0000318"/>
    <property type="project" value="GO_Central"/>
</dbReference>
<dbReference type="GO" id="GO:0030325">
    <property type="term" value="P:adrenal gland development"/>
    <property type="evidence" value="ECO:0000250"/>
    <property type="project" value="UniProtKB"/>
</dbReference>
<dbReference type="GO" id="GO:0008406">
    <property type="term" value="P:gonad development"/>
    <property type="evidence" value="ECO:0000250"/>
    <property type="project" value="UniProtKB"/>
</dbReference>
<dbReference type="GO" id="GO:0008584">
    <property type="term" value="P:male gonad development"/>
    <property type="evidence" value="ECO:0000250"/>
    <property type="project" value="UniProtKB"/>
</dbReference>
<dbReference type="GO" id="GO:0045892">
    <property type="term" value="P:negative regulation of DNA-templated transcription"/>
    <property type="evidence" value="ECO:0000250"/>
    <property type="project" value="UniProtKB"/>
</dbReference>
<dbReference type="GO" id="GO:0033144">
    <property type="term" value="P:negative regulation of intracellular steroid hormone receptor signaling pathway"/>
    <property type="evidence" value="ECO:0000250"/>
    <property type="project" value="UniProtKB"/>
</dbReference>
<dbReference type="GO" id="GO:0010894">
    <property type="term" value="P:negative regulation of steroid biosynthetic process"/>
    <property type="evidence" value="ECO:0000250"/>
    <property type="project" value="HGNC-UCL"/>
</dbReference>
<dbReference type="GO" id="GO:0000122">
    <property type="term" value="P:negative regulation of transcription by RNA polymerase II"/>
    <property type="evidence" value="ECO:0000318"/>
    <property type="project" value="GO_Central"/>
</dbReference>
<dbReference type="GO" id="GO:0008104">
    <property type="term" value="P:protein localization"/>
    <property type="evidence" value="ECO:0000250"/>
    <property type="project" value="UniProtKB"/>
</dbReference>
<dbReference type="GO" id="GO:0007283">
    <property type="term" value="P:spermatogenesis"/>
    <property type="evidence" value="ECO:0000318"/>
    <property type="project" value="GO_Central"/>
</dbReference>
<dbReference type="CDD" id="cd07350">
    <property type="entry name" value="NR_LBD_Dax1"/>
    <property type="match status" value="1"/>
</dbReference>
<dbReference type="FunFam" id="1.10.565.10:FF:000027">
    <property type="entry name" value="nuclear receptor subfamily 0 group B member 1"/>
    <property type="match status" value="1"/>
</dbReference>
<dbReference type="Gene3D" id="1.10.565.10">
    <property type="entry name" value="Retinoid X Receptor"/>
    <property type="match status" value="1"/>
</dbReference>
<dbReference type="InterPro" id="IPR035500">
    <property type="entry name" value="NHR-like_dom_sf"/>
</dbReference>
<dbReference type="InterPro" id="IPR033544">
    <property type="entry name" value="NR0B1/2"/>
</dbReference>
<dbReference type="InterPro" id="IPR000536">
    <property type="entry name" value="Nucl_hrmn_rcpt_lig-bd"/>
</dbReference>
<dbReference type="InterPro" id="IPR001723">
    <property type="entry name" value="Nuclear_hrmn_rcpt"/>
</dbReference>
<dbReference type="InterPro" id="IPR025900">
    <property type="entry name" value="Nuclear_receptor_repeat"/>
</dbReference>
<dbReference type="PANTHER" id="PTHR24081">
    <property type="entry name" value="NUCLEAR RECEPTOR SUBFAMILY 0 GROUP B"/>
    <property type="match status" value="1"/>
</dbReference>
<dbReference type="PANTHER" id="PTHR24081:SF1">
    <property type="entry name" value="NUCLEAR RECEPTOR SUBFAMILY 0 GROUP B MEMBER 1"/>
    <property type="match status" value="1"/>
</dbReference>
<dbReference type="Pfam" id="PF00104">
    <property type="entry name" value="Hormone_recep"/>
    <property type="match status" value="1"/>
</dbReference>
<dbReference type="Pfam" id="PF14046">
    <property type="entry name" value="NR_Repeat"/>
    <property type="match status" value="4"/>
</dbReference>
<dbReference type="PRINTS" id="PR00398">
    <property type="entry name" value="STRDHORMONER"/>
</dbReference>
<dbReference type="SMART" id="SM00430">
    <property type="entry name" value="HOLI"/>
    <property type="match status" value="1"/>
</dbReference>
<dbReference type="SUPFAM" id="SSF48508">
    <property type="entry name" value="Nuclear receptor ligand-binding domain"/>
    <property type="match status" value="1"/>
</dbReference>
<dbReference type="PROSITE" id="PS51843">
    <property type="entry name" value="NR_LBD"/>
    <property type="match status" value="1"/>
</dbReference>